<dbReference type="EMBL" id="CP000503">
    <property type="protein sequence ID" value="ABM23190.1"/>
    <property type="molecule type" value="Genomic_DNA"/>
</dbReference>
<dbReference type="RefSeq" id="WP_006079870.1">
    <property type="nucleotide sequence ID" value="NC_008750.1"/>
</dbReference>
<dbReference type="SMR" id="A1REU5"/>
<dbReference type="GeneID" id="94729700"/>
<dbReference type="KEGG" id="shw:Sputw3181_0339"/>
<dbReference type="HOGENOM" id="CLU_064548_3_1_6"/>
<dbReference type="Proteomes" id="UP000002597">
    <property type="component" value="Chromosome"/>
</dbReference>
<dbReference type="GO" id="GO:0022625">
    <property type="term" value="C:cytosolic large ribosomal subunit"/>
    <property type="evidence" value="ECO:0007669"/>
    <property type="project" value="TreeGrafter"/>
</dbReference>
<dbReference type="GO" id="GO:0003735">
    <property type="term" value="F:structural constituent of ribosome"/>
    <property type="evidence" value="ECO:0007669"/>
    <property type="project" value="InterPro"/>
</dbReference>
<dbReference type="GO" id="GO:0006412">
    <property type="term" value="P:translation"/>
    <property type="evidence" value="ECO:0007669"/>
    <property type="project" value="UniProtKB-UniRule"/>
</dbReference>
<dbReference type="FunFam" id="2.30.170.40:FF:000001">
    <property type="entry name" value="50S ribosomal protein L28"/>
    <property type="match status" value="1"/>
</dbReference>
<dbReference type="Gene3D" id="2.30.170.40">
    <property type="entry name" value="Ribosomal protein L28/L24"/>
    <property type="match status" value="1"/>
</dbReference>
<dbReference type="HAMAP" id="MF_00373">
    <property type="entry name" value="Ribosomal_bL28"/>
    <property type="match status" value="1"/>
</dbReference>
<dbReference type="InterPro" id="IPR026569">
    <property type="entry name" value="Ribosomal_bL28"/>
</dbReference>
<dbReference type="InterPro" id="IPR034704">
    <property type="entry name" value="Ribosomal_bL28/bL31-like_sf"/>
</dbReference>
<dbReference type="InterPro" id="IPR001383">
    <property type="entry name" value="Ribosomal_bL28_bact-type"/>
</dbReference>
<dbReference type="InterPro" id="IPR037147">
    <property type="entry name" value="Ribosomal_bL28_sf"/>
</dbReference>
<dbReference type="NCBIfam" id="TIGR00009">
    <property type="entry name" value="L28"/>
    <property type="match status" value="1"/>
</dbReference>
<dbReference type="PANTHER" id="PTHR13528">
    <property type="entry name" value="39S RIBOSOMAL PROTEIN L28, MITOCHONDRIAL"/>
    <property type="match status" value="1"/>
</dbReference>
<dbReference type="PANTHER" id="PTHR13528:SF2">
    <property type="entry name" value="LARGE RIBOSOMAL SUBUNIT PROTEIN BL28M"/>
    <property type="match status" value="1"/>
</dbReference>
<dbReference type="Pfam" id="PF00830">
    <property type="entry name" value="Ribosomal_L28"/>
    <property type="match status" value="1"/>
</dbReference>
<dbReference type="SUPFAM" id="SSF143800">
    <property type="entry name" value="L28p-like"/>
    <property type="match status" value="1"/>
</dbReference>
<feature type="chain" id="PRO_1000007354" description="Large ribosomal subunit protein bL28">
    <location>
        <begin position="1"/>
        <end position="78"/>
    </location>
</feature>
<feature type="region of interest" description="Disordered" evidence="2">
    <location>
        <begin position="1"/>
        <end position="21"/>
    </location>
</feature>
<comment type="similarity">
    <text evidence="1">Belongs to the bacterial ribosomal protein bL28 family.</text>
</comment>
<evidence type="ECO:0000255" key="1">
    <source>
        <dbReference type="HAMAP-Rule" id="MF_00373"/>
    </source>
</evidence>
<evidence type="ECO:0000256" key="2">
    <source>
        <dbReference type="SAM" id="MobiDB-lite"/>
    </source>
</evidence>
<evidence type="ECO:0000305" key="3"/>
<gene>
    <name evidence="1" type="primary">rpmB</name>
    <name type="ordered locus">Sputw3181_0339</name>
</gene>
<sequence length="78" mass="9113">MSRVCQVTGKKPMVGNNRSHAKNATRRRFLPNLQNHRFWLEEEKRFVQLRVSTKGIRLIDKKGIEVVVAELRARGEKV</sequence>
<accession>A1REU5</accession>
<organism>
    <name type="scientific">Shewanella sp. (strain W3-18-1)</name>
    <dbReference type="NCBI Taxonomy" id="351745"/>
    <lineage>
        <taxon>Bacteria</taxon>
        <taxon>Pseudomonadati</taxon>
        <taxon>Pseudomonadota</taxon>
        <taxon>Gammaproteobacteria</taxon>
        <taxon>Alteromonadales</taxon>
        <taxon>Shewanellaceae</taxon>
        <taxon>Shewanella</taxon>
    </lineage>
</organism>
<protein>
    <recommendedName>
        <fullName evidence="1">Large ribosomal subunit protein bL28</fullName>
    </recommendedName>
    <alternativeName>
        <fullName evidence="3">50S ribosomal protein L28</fullName>
    </alternativeName>
</protein>
<reference key="1">
    <citation type="submission" date="2006-12" db="EMBL/GenBank/DDBJ databases">
        <title>Complete sequence of Shewanella sp. W3-18-1.</title>
        <authorList>
            <consortium name="US DOE Joint Genome Institute"/>
            <person name="Copeland A."/>
            <person name="Lucas S."/>
            <person name="Lapidus A."/>
            <person name="Barry K."/>
            <person name="Detter J.C."/>
            <person name="Glavina del Rio T."/>
            <person name="Hammon N."/>
            <person name="Israni S."/>
            <person name="Dalin E."/>
            <person name="Tice H."/>
            <person name="Pitluck S."/>
            <person name="Chain P."/>
            <person name="Malfatti S."/>
            <person name="Shin M."/>
            <person name="Vergez L."/>
            <person name="Schmutz J."/>
            <person name="Larimer F."/>
            <person name="Land M."/>
            <person name="Hauser L."/>
            <person name="Kyrpides N."/>
            <person name="Lykidis A."/>
            <person name="Tiedje J."/>
            <person name="Richardson P."/>
        </authorList>
    </citation>
    <scope>NUCLEOTIDE SEQUENCE [LARGE SCALE GENOMIC DNA]</scope>
    <source>
        <strain>W3-18-1</strain>
    </source>
</reference>
<keyword id="KW-0687">Ribonucleoprotein</keyword>
<keyword id="KW-0689">Ribosomal protein</keyword>
<name>RL28_SHESW</name>
<proteinExistence type="inferred from homology"/>